<gene>
    <name evidence="1" type="primary">flpA</name>
    <name type="ordered locus">APE_2196</name>
</gene>
<protein>
    <recommendedName>
        <fullName evidence="1">Fibrillarin-like rRNA/tRNA 2'-O-methyltransferase</fullName>
        <ecNumber evidence="1">2.1.1.-</ecNumber>
    </recommendedName>
</protein>
<name>FLPA_AERPE</name>
<accession>Q9Y9U3</accession>
<organism>
    <name type="scientific">Aeropyrum pernix (strain ATCC 700893 / DSM 11879 / JCM 9820 / NBRC 100138 / K1)</name>
    <dbReference type="NCBI Taxonomy" id="272557"/>
    <lineage>
        <taxon>Archaea</taxon>
        <taxon>Thermoproteota</taxon>
        <taxon>Thermoprotei</taxon>
        <taxon>Desulfurococcales</taxon>
        <taxon>Desulfurococcaceae</taxon>
        <taxon>Aeropyrum</taxon>
    </lineage>
</organism>
<feature type="chain" id="PRO_0000148528" description="Fibrillarin-like rRNA/tRNA 2'-O-methyltransferase">
    <location>
        <begin position="1"/>
        <end position="233"/>
    </location>
</feature>
<feature type="binding site" evidence="2">
    <location>
        <begin position="90"/>
        <end position="91"/>
    </location>
    <ligand>
        <name>S-adenosyl-L-methionine</name>
        <dbReference type="ChEBI" id="CHEBI:59789"/>
    </ligand>
</feature>
<feature type="binding site" evidence="2">
    <location>
        <begin position="109"/>
        <end position="110"/>
    </location>
    <ligand>
        <name>S-adenosyl-L-methionine</name>
        <dbReference type="ChEBI" id="CHEBI:59789"/>
    </ligand>
</feature>
<feature type="binding site" evidence="2">
    <location>
        <begin position="134"/>
        <end position="135"/>
    </location>
    <ligand>
        <name>S-adenosyl-L-methionine</name>
        <dbReference type="ChEBI" id="CHEBI:59789"/>
    </ligand>
</feature>
<feature type="binding site" evidence="2">
    <location>
        <begin position="154"/>
        <end position="157"/>
    </location>
    <ligand>
        <name>S-adenosyl-L-methionine</name>
        <dbReference type="ChEBI" id="CHEBI:59789"/>
    </ligand>
</feature>
<feature type="strand" evidence="3">
    <location>
        <begin position="4"/>
        <end position="9"/>
    </location>
</feature>
<feature type="strand" evidence="3">
    <location>
        <begin position="11"/>
        <end position="13"/>
    </location>
</feature>
<feature type="strand" evidence="3">
    <location>
        <begin position="16"/>
        <end position="21"/>
    </location>
</feature>
<feature type="strand" evidence="3">
    <location>
        <begin position="26"/>
        <end position="31"/>
    </location>
</feature>
<feature type="strand" evidence="3">
    <location>
        <begin position="39"/>
        <end position="41"/>
    </location>
</feature>
<feature type="strand" evidence="3">
    <location>
        <begin position="44"/>
        <end position="47"/>
    </location>
</feature>
<feature type="strand" evidence="3">
    <location>
        <begin position="50"/>
        <end position="54"/>
    </location>
</feature>
<feature type="turn" evidence="3">
    <location>
        <begin position="57"/>
        <end position="59"/>
    </location>
</feature>
<feature type="helix" evidence="3">
    <location>
        <begin position="61"/>
        <end position="67"/>
    </location>
</feature>
<feature type="strand" evidence="3">
    <location>
        <begin position="80"/>
        <end position="84"/>
    </location>
</feature>
<feature type="helix" evidence="3">
    <location>
        <begin position="90"/>
        <end position="99"/>
    </location>
</feature>
<feature type="strand" evidence="3">
    <location>
        <begin position="104"/>
        <end position="109"/>
    </location>
</feature>
<feature type="helix" evidence="3">
    <location>
        <begin position="112"/>
        <end position="121"/>
    </location>
</feature>
<feature type="strand" evidence="3">
    <location>
        <begin position="128"/>
        <end position="133"/>
    </location>
</feature>
<feature type="helix" evidence="3">
    <location>
        <begin position="138"/>
        <end position="141"/>
    </location>
</feature>
<feature type="turn" evidence="3">
    <location>
        <begin position="142"/>
        <end position="144"/>
    </location>
</feature>
<feature type="strand" evidence="3">
    <location>
        <begin position="148"/>
        <end position="153"/>
    </location>
</feature>
<feature type="helix" evidence="3">
    <location>
        <begin position="160"/>
        <end position="171"/>
    </location>
</feature>
<feature type="strand" evidence="3">
    <location>
        <begin position="172"/>
        <end position="183"/>
    </location>
</feature>
<feature type="helix" evidence="3">
    <location>
        <begin position="186"/>
        <end position="190"/>
    </location>
</feature>
<feature type="helix" evidence="3">
    <location>
        <begin position="195"/>
        <end position="206"/>
    </location>
</feature>
<feature type="strand" evidence="3">
    <location>
        <begin position="210"/>
        <end position="216"/>
    </location>
</feature>
<feature type="turn" evidence="3">
    <location>
        <begin position="218"/>
        <end position="220"/>
    </location>
</feature>
<feature type="strand" evidence="3">
    <location>
        <begin position="224"/>
        <end position="230"/>
    </location>
</feature>
<keyword id="KW-0002">3D-structure</keyword>
<keyword id="KW-0489">Methyltransferase</keyword>
<keyword id="KW-1185">Reference proteome</keyword>
<keyword id="KW-0694">RNA-binding</keyword>
<keyword id="KW-0698">rRNA processing</keyword>
<keyword id="KW-0808">Transferase</keyword>
<keyword id="KW-0819">tRNA processing</keyword>
<dbReference type="EC" id="2.1.1.-" evidence="1"/>
<dbReference type="EMBL" id="BA000002">
    <property type="protein sequence ID" value="BAA81207.1"/>
    <property type="molecule type" value="Genomic_DNA"/>
</dbReference>
<dbReference type="PIR" id="G72527">
    <property type="entry name" value="G72527"/>
</dbReference>
<dbReference type="RefSeq" id="WP_010866858.1">
    <property type="nucleotide sequence ID" value="NC_000854.2"/>
</dbReference>
<dbReference type="PDB" id="4DF3">
    <property type="method" value="X-ray"/>
    <property type="resolution" value="1.73 A"/>
    <property type="chains" value="A/B=1-233"/>
</dbReference>
<dbReference type="PDBsum" id="4DF3"/>
<dbReference type="SMR" id="Q9Y9U3"/>
<dbReference type="STRING" id="272557.APE_2196"/>
<dbReference type="EnsemblBacteria" id="BAA81207">
    <property type="protein sequence ID" value="BAA81207"/>
    <property type="gene ID" value="APE_2196"/>
</dbReference>
<dbReference type="GeneID" id="1445258"/>
<dbReference type="KEGG" id="ape:APE_2196"/>
<dbReference type="PATRIC" id="fig|272557.25.peg.1467"/>
<dbReference type="eggNOG" id="arCOG00078">
    <property type="taxonomic scope" value="Archaea"/>
</dbReference>
<dbReference type="EvolutionaryTrace" id="Q9Y9U3"/>
<dbReference type="Proteomes" id="UP000002518">
    <property type="component" value="Chromosome"/>
</dbReference>
<dbReference type="GO" id="GO:1990259">
    <property type="term" value="F:histone H2AQ104 methyltransferase activity"/>
    <property type="evidence" value="ECO:0007669"/>
    <property type="project" value="TreeGrafter"/>
</dbReference>
<dbReference type="GO" id="GO:0003723">
    <property type="term" value="F:RNA binding"/>
    <property type="evidence" value="ECO:0007669"/>
    <property type="project" value="UniProtKB-UniRule"/>
</dbReference>
<dbReference type="GO" id="GO:0008649">
    <property type="term" value="F:rRNA methyltransferase activity"/>
    <property type="evidence" value="ECO:0007669"/>
    <property type="project" value="TreeGrafter"/>
</dbReference>
<dbReference type="GO" id="GO:0000494">
    <property type="term" value="P:box C/D sno(s)RNA 3'-end processing"/>
    <property type="evidence" value="ECO:0007669"/>
    <property type="project" value="TreeGrafter"/>
</dbReference>
<dbReference type="GO" id="GO:0008033">
    <property type="term" value="P:tRNA processing"/>
    <property type="evidence" value="ECO:0007669"/>
    <property type="project" value="UniProtKB-UniRule"/>
</dbReference>
<dbReference type="FunFam" id="3.30.200.20:FF:000613">
    <property type="entry name" value="Fibrillarin-like rRNA/tRNA 2'-O-methyltransferase"/>
    <property type="match status" value="1"/>
</dbReference>
<dbReference type="Gene3D" id="3.30.200.20">
    <property type="entry name" value="Phosphorylase Kinase, domain 1"/>
    <property type="match status" value="1"/>
</dbReference>
<dbReference type="Gene3D" id="3.40.50.150">
    <property type="entry name" value="Vaccinia Virus protein VP39"/>
    <property type="match status" value="1"/>
</dbReference>
<dbReference type="HAMAP" id="MF_00351">
    <property type="entry name" value="RNA_methyltransf_FlpA"/>
    <property type="match status" value="1"/>
</dbReference>
<dbReference type="InterPro" id="IPR000692">
    <property type="entry name" value="Fibrillarin"/>
</dbReference>
<dbReference type="InterPro" id="IPR020813">
    <property type="entry name" value="Fibrillarin_CS"/>
</dbReference>
<dbReference type="InterPro" id="IPR029063">
    <property type="entry name" value="SAM-dependent_MTases_sf"/>
</dbReference>
<dbReference type="NCBIfam" id="NF003275">
    <property type="entry name" value="PRK04266.1-1"/>
    <property type="match status" value="1"/>
</dbReference>
<dbReference type="NCBIfam" id="NF003276">
    <property type="entry name" value="PRK04266.1-2"/>
    <property type="match status" value="1"/>
</dbReference>
<dbReference type="NCBIfam" id="NF003277">
    <property type="entry name" value="PRK04266.1-3"/>
    <property type="match status" value="1"/>
</dbReference>
<dbReference type="PANTHER" id="PTHR10335:SF17">
    <property type="entry name" value="FIBRILLARIN"/>
    <property type="match status" value="1"/>
</dbReference>
<dbReference type="PANTHER" id="PTHR10335">
    <property type="entry name" value="RRNA 2-O-METHYLTRANSFERASE FIBRILLARIN"/>
    <property type="match status" value="1"/>
</dbReference>
<dbReference type="Pfam" id="PF01269">
    <property type="entry name" value="Fibrillarin"/>
    <property type="match status" value="1"/>
</dbReference>
<dbReference type="PIRSF" id="PIRSF006540">
    <property type="entry name" value="Nop17p"/>
    <property type="match status" value="1"/>
</dbReference>
<dbReference type="PRINTS" id="PR00052">
    <property type="entry name" value="FIBRILLARIN"/>
</dbReference>
<dbReference type="SMART" id="SM01206">
    <property type="entry name" value="Fibrillarin"/>
    <property type="match status" value="1"/>
</dbReference>
<dbReference type="SUPFAM" id="SSF53335">
    <property type="entry name" value="S-adenosyl-L-methionine-dependent methyltransferases"/>
    <property type="match status" value="1"/>
</dbReference>
<dbReference type="PROSITE" id="PS00566">
    <property type="entry name" value="FIBRILLARIN"/>
    <property type="match status" value="1"/>
</dbReference>
<sequence>MVEVVSVREHDRWRGVYVVELEDGSLRIATKNLVPGQRVYGERIFRYNGEEYREWNAYRSKLAAALLKGLIELPVKEGDRILYLGIASGTTASHMSDIIGPRGRIYGVEFAPRVMRDLLTVVRDRRNIFPILGDARFPEKYRHLVEGVDGLYADVAQPEQAAIVVRNARFFLRDGGYMLMAIKARSIDVTTEPSEVYKREIKTLMDGGLEIKDVVHLDPFDRDHAMIYAVMRR</sequence>
<reference key="1">
    <citation type="journal article" date="1999" name="DNA Res.">
        <title>Complete genome sequence of an aerobic hyper-thermophilic crenarchaeon, Aeropyrum pernix K1.</title>
        <authorList>
            <person name="Kawarabayasi Y."/>
            <person name="Hino Y."/>
            <person name="Horikawa H."/>
            <person name="Yamazaki S."/>
            <person name="Haikawa Y."/>
            <person name="Jin-no K."/>
            <person name="Takahashi M."/>
            <person name="Sekine M."/>
            <person name="Baba S."/>
            <person name="Ankai A."/>
            <person name="Kosugi H."/>
            <person name="Hosoyama A."/>
            <person name="Fukui S."/>
            <person name="Nagai Y."/>
            <person name="Nishijima K."/>
            <person name="Nakazawa H."/>
            <person name="Takamiya M."/>
            <person name="Masuda S."/>
            <person name="Funahashi T."/>
            <person name="Tanaka T."/>
            <person name="Kudoh Y."/>
            <person name="Yamazaki J."/>
            <person name="Kushida N."/>
            <person name="Oguchi A."/>
            <person name="Aoki K."/>
            <person name="Kubota K."/>
            <person name="Nakamura Y."/>
            <person name="Nomura N."/>
            <person name="Sako Y."/>
            <person name="Kikuchi H."/>
        </authorList>
    </citation>
    <scope>NUCLEOTIDE SEQUENCE [LARGE SCALE GENOMIC DNA]</scope>
    <source>
        <strain>ATCC 700893 / DSM 11879 / JCM 9820 / NBRC 100138 / K1</strain>
    </source>
</reference>
<reference key="2">
    <citation type="journal article" date="2012" name="Acta Crystallogr. F">
        <title>Structure of Aeropyrum pernix fibrillarin in complex with natively bound S-adenosyl-L-methionine at 1.7 A resolution.</title>
        <authorList>
            <person name="de Silva U."/>
            <person name="Zhou Z."/>
            <person name="Brown B.A. II"/>
        </authorList>
    </citation>
    <scope>X-RAY CRYSTALLOGRAPHY (1.73 ANGSTROMS) IN COMPLEX WITH S-ADENOSYL-L-METHIONINE</scope>
</reference>
<comment type="function">
    <text evidence="1">Involved in pre-rRNA and tRNA processing. Utilizes the methyl donor S-adenosyl-L-methionine to catalyze the site-specific 2'-hydroxyl methylation of ribose moieties in rRNA and tRNA. Site specificity is provided by a guide RNA that base pairs with the substrate. Methylation occurs at a characteristic distance from the sequence involved in base pairing with the guide RNA.</text>
</comment>
<comment type="subunit">
    <text evidence="1">Interacts with nop5. Component of box C/D small ribonucleoprotein (sRNP) particles that contain rpl7ae, FlpA and nop5, plus a guide RNA.</text>
</comment>
<comment type="similarity">
    <text evidence="1">Belongs to the methyltransferase superfamily. Fibrillarin family.</text>
</comment>
<proteinExistence type="evidence at protein level"/>
<evidence type="ECO:0000255" key="1">
    <source>
        <dbReference type="HAMAP-Rule" id="MF_00351"/>
    </source>
</evidence>
<evidence type="ECO:0000269" key="2">
    <source>
    </source>
</evidence>
<evidence type="ECO:0007829" key="3">
    <source>
        <dbReference type="PDB" id="4DF3"/>
    </source>
</evidence>